<feature type="chain" id="PRO_0000400836" description="Protein king tubby">
    <location>
        <begin position="1"/>
        <end position="448"/>
    </location>
</feature>
<feature type="region of interest" description="Disordered" evidence="3">
    <location>
        <begin position="103"/>
        <end position="195"/>
    </location>
</feature>
<feature type="compositionally biased region" description="Low complexity" evidence="3">
    <location>
        <begin position="118"/>
        <end position="133"/>
    </location>
</feature>
<feature type="compositionally biased region" description="Gly residues" evidence="3">
    <location>
        <begin position="182"/>
        <end position="191"/>
    </location>
</feature>
<feature type="modified residue" description="Phosphoserine" evidence="1">
    <location>
        <position position="141"/>
    </location>
</feature>
<evidence type="ECO:0000250" key="1">
    <source>
        <dbReference type="UniProtKB" id="Q86PC9"/>
    </source>
</evidence>
<evidence type="ECO:0000255" key="2"/>
<evidence type="ECO:0000256" key="3">
    <source>
        <dbReference type="SAM" id="MobiDB-lite"/>
    </source>
</evidence>
<evidence type="ECO:0000312" key="4">
    <source>
        <dbReference type="EMBL" id="EDV55408.1"/>
    </source>
</evidence>
<accession>B3NJY0</accession>
<organism>
    <name type="scientific">Drosophila erecta</name>
    <name type="common">Fruit fly</name>
    <dbReference type="NCBI Taxonomy" id="7220"/>
    <lineage>
        <taxon>Eukaryota</taxon>
        <taxon>Metazoa</taxon>
        <taxon>Ecdysozoa</taxon>
        <taxon>Arthropoda</taxon>
        <taxon>Hexapoda</taxon>
        <taxon>Insecta</taxon>
        <taxon>Pterygota</taxon>
        <taxon>Neoptera</taxon>
        <taxon>Endopterygota</taxon>
        <taxon>Diptera</taxon>
        <taxon>Brachycera</taxon>
        <taxon>Muscomorpha</taxon>
        <taxon>Ephydroidea</taxon>
        <taxon>Drosophilidae</taxon>
        <taxon>Drosophila</taxon>
        <taxon>Sophophora</taxon>
    </lineage>
</organism>
<name>TULP_DROER</name>
<proteinExistence type="inferred from homology"/>
<reference evidence="4" key="1">
    <citation type="journal article" date="2007" name="Nature">
        <title>Evolution of genes and genomes on the Drosophila phylogeny.</title>
        <authorList>
            <consortium name="Drosophila 12 genomes consortium"/>
        </authorList>
    </citation>
    <scope>NUCLEOTIDE SEQUENCE [LARGE SCALE GENOMIC DNA]</scope>
    <source>
        <strain evidence="4">Tucson 14021-0224.01</strain>
    </source>
</reference>
<dbReference type="EMBL" id="CH954179">
    <property type="protein sequence ID" value="EDV55408.1"/>
    <property type="molecule type" value="Genomic_DNA"/>
</dbReference>
<dbReference type="SMR" id="B3NJY0"/>
<dbReference type="EnsemblMetazoa" id="FBtr0411847">
    <property type="protein sequence ID" value="FBpp0370212"/>
    <property type="gene ID" value="FBgn0114263"/>
</dbReference>
<dbReference type="EnsemblMetazoa" id="XM_026980840.1">
    <property type="protein sequence ID" value="XP_026836641.1"/>
    <property type="gene ID" value="LOC6547821"/>
</dbReference>
<dbReference type="GeneID" id="6547821"/>
<dbReference type="KEGG" id="der:6547821"/>
<dbReference type="CTD" id="37400"/>
<dbReference type="eggNOG" id="KOG2502">
    <property type="taxonomic scope" value="Eukaryota"/>
</dbReference>
<dbReference type="HOGENOM" id="CLU_028236_1_1_1"/>
<dbReference type="OMA" id="GYDGPMQ"/>
<dbReference type="OrthoDB" id="8775810at2759"/>
<dbReference type="PhylomeDB" id="B3NJY0"/>
<dbReference type="ChiTaRS" id="ktub">
    <property type="organism name" value="fly"/>
</dbReference>
<dbReference type="Proteomes" id="UP000008711">
    <property type="component" value="Unassembled WGS sequence"/>
</dbReference>
<dbReference type="GO" id="GO:0060170">
    <property type="term" value="C:ciliary membrane"/>
    <property type="evidence" value="ECO:0007669"/>
    <property type="project" value="UniProtKB-SubCell"/>
</dbReference>
<dbReference type="GO" id="GO:0005737">
    <property type="term" value="C:cytoplasm"/>
    <property type="evidence" value="ECO:0000250"/>
    <property type="project" value="UniProtKB"/>
</dbReference>
<dbReference type="GO" id="GO:0005634">
    <property type="term" value="C:nucleus"/>
    <property type="evidence" value="ECO:0000250"/>
    <property type="project" value="UniProtKB"/>
</dbReference>
<dbReference type="GO" id="GO:0016028">
    <property type="term" value="C:rhabdomere"/>
    <property type="evidence" value="ECO:0007669"/>
    <property type="project" value="UniProtKB-SubCell"/>
</dbReference>
<dbReference type="GO" id="GO:0061512">
    <property type="term" value="P:protein localization to cilium"/>
    <property type="evidence" value="ECO:0007669"/>
    <property type="project" value="TreeGrafter"/>
</dbReference>
<dbReference type="FunFam" id="3.20.90.10:FF:000001">
    <property type="entry name" value="Tubby-like protein"/>
    <property type="match status" value="1"/>
</dbReference>
<dbReference type="Gene3D" id="3.20.90.10">
    <property type="entry name" value="Tubby Protein, Chain A"/>
    <property type="match status" value="1"/>
</dbReference>
<dbReference type="InterPro" id="IPR025659">
    <property type="entry name" value="Tubby-like_C"/>
</dbReference>
<dbReference type="InterPro" id="IPR000007">
    <property type="entry name" value="Tubby_C"/>
</dbReference>
<dbReference type="InterPro" id="IPR018066">
    <property type="entry name" value="Tubby_C_CS"/>
</dbReference>
<dbReference type="PANTHER" id="PTHR16517:SF7">
    <property type="entry name" value="PROTEIN KING TUBBY"/>
    <property type="match status" value="1"/>
</dbReference>
<dbReference type="PANTHER" id="PTHR16517">
    <property type="entry name" value="TUBBY-RELATED"/>
    <property type="match status" value="1"/>
</dbReference>
<dbReference type="Pfam" id="PF01167">
    <property type="entry name" value="Tub"/>
    <property type="match status" value="1"/>
</dbReference>
<dbReference type="PRINTS" id="PR01573">
    <property type="entry name" value="SUPERTUBBY"/>
</dbReference>
<dbReference type="SUPFAM" id="SSF54518">
    <property type="entry name" value="Tubby C-terminal domain-like"/>
    <property type="match status" value="1"/>
</dbReference>
<dbReference type="PROSITE" id="PS01200">
    <property type="entry name" value="TUB_1"/>
    <property type="match status" value="1"/>
</dbReference>
<dbReference type="PROSITE" id="PS01201">
    <property type="entry name" value="TUB_2"/>
    <property type="match status" value="1"/>
</dbReference>
<sequence length="448" mass="49881">MNRQLMEAYIRQKRASPGMVQASDLQINRPMSGMRSNSRELHAYDGPMQFISSPQNPDQILSNGSPGGITPVAMNTSRNHSNNMRSLSTINQEADLIEEISSHELEDEESSPVTVIEQHQQSASHSANSTQSQKPRARQHSFSDNLDEDDYTNRNVAGAAPVRPAGMASSPYKDATLEGSSNGTGNGTGGESEGDVIGNIDQFVMQPAPQGVLYKCRITRDRKGMDRGLFPIYYLHLERDYGKKIFLLGGRKRKKSKTSNYIVSCDPTDLSRNADGFCGKLRSNVFGTSFTVFDNGNKESTESPRLDLAVIIYDTNILGFKGPRNMTVILPGMTEDDQRVKISSADPKQQGILDLWKMKNMDNIVELHNKTPVWNDETQSYVLNFHGRVTQASVKNFQLVHDSDPEYIVMQFGRTSEDVFTMDYRYPLCAMQAFAIALSSFDGKIACE</sequence>
<gene>
    <name evidence="1" type="primary">king-tubby</name>
    <name type="ORF">GG22088</name>
</gene>
<comment type="subcellular location">
    <subcellularLocation>
        <location evidence="1">Cytoplasm</location>
    </subcellularLocation>
    <subcellularLocation>
        <location evidence="1">Nucleus</location>
    </subcellularLocation>
    <subcellularLocation>
        <location evidence="1">Cell projection</location>
        <location evidence="1">Cilium membrane</location>
        <topology evidence="1">Peripheral membrane protein</topology>
    </subcellularLocation>
    <subcellularLocation>
        <location evidence="1">Cell projection</location>
        <location evidence="1">Rhabdomere</location>
    </subcellularLocation>
</comment>
<comment type="similarity">
    <text evidence="2">Belongs to the TUB family.</text>
</comment>
<keyword id="KW-1003">Cell membrane</keyword>
<keyword id="KW-0966">Cell projection</keyword>
<keyword id="KW-0963">Cytoplasm</keyword>
<keyword id="KW-0472">Membrane</keyword>
<keyword id="KW-0539">Nucleus</keyword>
<keyword id="KW-0597">Phosphoprotein</keyword>
<protein>
    <recommendedName>
        <fullName evidence="1">Protein king tubby</fullName>
    </recommendedName>
</protein>